<protein>
    <recommendedName>
        <fullName evidence="1">Protein RecA</fullName>
    </recommendedName>
    <alternativeName>
        <fullName evidence="1">Recombinase A</fullName>
    </alternativeName>
</protein>
<proteinExistence type="inferred from homology"/>
<gene>
    <name evidence="1" type="primary">recA</name>
    <name type="ordered locus">BDU_135</name>
</gene>
<dbReference type="EMBL" id="CP000976">
    <property type="protein sequence ID" value="ACH93091.1"/>
    <property type="molecule type" value="Genomic_DNA"/>
</dbReference>
<dbReference type="RefSeq" id="WP_012537903.1">
    <property type="nucleotide sequence ID" value="NC_011229.1"/>
</dbReference>
<dbReference type="SMR" id="B5RLK6"/>
<dbReference type="STRING" id="412419.BDU_135"/>
<dbReference type="KEGG" id="bdu:BDU_135"/>
<dbReference type="eggNOG" id="COG0468">
    <property type="taxonomic scope" value="Bacteria"/>
</dbReference>
<dbReference type="HOGENOM" id="CLU_040469_3_2_12"/>
<dbReference type="OrthoDB" id="9776733at2"/>
<dbReference type="Proteomes" id="UP000000611">
    <property type="component" value="Chromosome"/>
</dbReference>
<dbReference type="GO" id="GO:0005737">
    <property type="term" value="C:cytoplasm"/>
    <property type="evidence" value="ECO:0007669"/>
    <property type="project" value="UniProtKB-SubCell"/>
</dbReference>
<dbReference type="GO" id="GO:0005524">
    <property type="term" value="F:ATP binding"/>
    <property type="evidence" value="ECO:0007669"/>
    <property type="project" value="UniProtKB-UniRule"/>
</dbReference>
<dbReference type="GO" id="GO:0016887">
    <property type="term" value="F:ATP hydrolysis activity"/>
    <property type="evidence" value="ECO:0007669"/>
    <property type="project" value="InterPro"/>
</dbReference>
<dbReference type="GO" id="GO:0140664">
    <property type="term" value="F:ATP-dependent DNA damage sensor activity"/>
    <property type="evidence" value="ECO:0007669"/>
    <property type="project" value="InterPro"/>
</dbReference>
<dbReference type="GO" id="GO:0003684">
    <property type="term" value="F:damaged DNA binding"/>
    <property type="evidence" value="ECO:0007669"/>
    <property type="project" value="UniProtKB-UniRule"/>
</dbReference>
<dbReference type="GO" id="GO:0003697">
    <property type="term" value="F:single-stranded DNA binding"/>
    <property type="evidence" value="ECO:0007669"/>
    <property type="project" value="UniProtKB-UniRule"/>
</dbReference>
<dbReference type="GO" id="GO:0006310">
    <property type="term" value="P:DNA recombination"/>
    <property type="evidence" value="ECO:0007669"/>
    <property type="project" value="UniProtKB-UniRule"/>
</dbReference>
<dbReference type="GO" id="GO:0006281">
    <property type="term" value="P:DNA repair"/>
    <property type="evidence" value="ECO:0007669"/>
    <property type="project" value="UniProtKB-UniRule"/>
</dbReference>
<dbReference type="GO" id="GO:0009432">
    <property type="term" value="P:SOS response"/>
    <property type="evidence" value="ECO:0007669"/>
    <property type="project" value="UniProtKB-UniRule"/>
</dbReference>
<dbReference type="CDD" id="cd00983">
    <property type="entry name" value="RecA"/>
    <property type="match status" value="1"/>
</dbReference>
<dbReference type="FunFam" id="3.40.50.300:FF:000087">
    <property type="entry name" value="Recombinase RecA"/>
    <property type="match status" value="1"/>
</dbReference>
<dbReference type="Gene3D" id="3.40.50.300">
    <property type="entry name" value="P-loop containing nucleotide triphosphate hydrolases"/>
    <property type="match status" value="1"/>
</dbReference>
<dbReference type="HAMAP" id="MF_00268">
    <property type="entry name" value="RecA"/>
    <property type="match status" value="1"/>
</dbReference>
<dbReference type="InterPro" id="IPR003593">
    <property type="entry name" value="AAA+_ATPase"/>
</dbReference>
<dbReference type="InterPro" id="IPR013765">
    <property type="entry name" value="DNA_recomb/repair_RecA"/>
</dbReference>
<dbReference type="InterPro" id="IPR020584">
    <property type="entry name" value="DNA_recomb/repair_RecA_CS"/>
</dbReference>
<dbReference type="InterPro" id="IPR027417">
    <property type="entry name" value="P-loop_NTPase"/>
</dbReference>
<dbReference type="InterPro" id="IPR049261">
    <property type="entry name" value="RecA-like_C"/>
</dbReference>
<dbReference type="InterPro" id="IPR049428">
    <property type="entry name" value="RecA-like_N"/>
</dbReference>
<dbReference type="InterPro" id="IPR020588">
    <property type="entry name" value="RecA_ATP-bd"/>
</dbReference>
<dbReference type="InterPro" id="IPR023400">
    <property type="entry name" value="RecA_C_sf"/>
</dbReference>
<dbReference type="InterPro" id="IPR020587">
    <property type="entry name" value="RecA_monomer-monomer_interface"/>
</dbReference>
<dbReference type="NCBIfam" id="TIGR02012">
    <property type="entry name" value="tigrfam_recA"/>
    <property type="match status" value="1"/>
</dbReference>
<dbReference type="PANTHER" id="PTHR45900:SF1">
    <property type="entry name" value="MITOCHONDRIAL DNA REPAIR PROTEIN RECA HOMOLOG-RELATED"/>
    <property type="match status" value="1"/>
</dbReference>
<dbReference type="PANTHER" id="PTHR45900">
    <property type="entry name" value="RECA"/>
    <property type="match status" value="1"/>
</dbReference>
<dbReference type="Pfam" id="PF00154">
    <property type="entry name" value="RecA"/>
    <property type="match status" value="1"/>
</dbReference>
<dbReference type="Pfam" id="PF21096">
    <property type="entry name" value="RecA_C"/>
    <property type="match status" value="1"/>
</dbReference>
<dbReference type="PRINTS" id="PR00142">
    <property type="entry name" value="RECA"/>
</dbReference>
<dbReference type="SMART" id="SM00382">
    <property type="entry name" value="AAA"/>
    <property type="match status" value="1"/>
</dbReference>
<dbReference type="SUPFAM" id="SSF52540">
    <property type="entry name" value="P-loop containing nucleoside triphosphate hydrolases"/>
    <property type="match status" value="1"/>
</dbReference>
<dbReference type="SUPFAM" id="SSF54752">
    <property type="entry name" value="RecA protein, C-terminal domain"/>
    <property type="match status" value="1"/>
</dbReference>
<dbReference type="PROSITE" id="PS00321">
    <property type="entry name" value="RECA_1"/>
    <property type="match status" value="1"/>
</dbReference>
<dbReference type="PROSITE" id="PS50162">
    <property type="entry name" value="RECA_2"/>
    <property type="match status" value="1"/>
</dbReference>
<dbReference type="PROSITE" id="PS50163">
    <property type="entry name" value="RECA_3"/>
    <property type="match status" value="1"/>
</dbReference>
<feature type="chain" id="PRO_1000114314" description="Protein RecA">
    <location>
        <begin position="1"/>
        <end position="363"/>
    </location>
</feature>
<feature type="binding site" evidence="1">
    <location>
        <begin position="79"/>
        <end position="86"/>
    </location>
    <ligand>
        <name>ATP</name>
        <dbReference type="ChEBI" id="CHEBI:30616"/>
    </ligand>
</feature>
<keyword id="KW-0067">ATP-binding</keyword>
<keyword id="KW-0963">Cytoplasm</keyword>
<keyword id="KW-0227">DNA damage</keyword>
<keyword id="KW-0233">DNA recombination</keyword>
<keyword id="KW-0234">DNA repair</keyword>
<keyword id="KW-0238">DNA-binding</keyword>
<keyword id="KW-0547">Nucleotide-binding</keyword>
<keyword id="KW-0742">SOS response</keyword>
<sequence length="363" mass="39597">MSKLKDPMDDSLKNKLNKEKAIELARVQIEKDFGKGSLIKMGESPVGKYLESIPSGSILLDEAIGIGGYPRGRVVEIFGPESSGKTTLTLQAIAEIQKTGGIAAFIDAEHALDPVYARALGVNINELWLSQPDTGEQALDIAEYLIRSGGVDLIVVDSVAALTPQAEIDGEMGDTQIGLQARLMSKALRKITAILSKSNTCIMFINQIRMKIGLVFGSPETTTGGNALKFYSSLRLEVRKVEQVIGSSSDNVIGNKIRVKVVKNKVAPPFRKAELIVYFGKGISREASILDAAIKYNLVQKSGSWYAMGDDNLGQGRENVIEYLFKEKALANELENKLRKIIFESPSQDSLTVDISKSEENKE</sequence>
<comment type="function">
    <text evidence="1">Can catalyze the hydrolysis of ATP in the presence of single-stranded DNA, the ATP-dependent uptake of single-stranded DNA by duplex DNA, and the ATP-dependent hybridization of homologous single-stranded DNAs. It interacts with LexA causing its activation and leading to its autocatalytic cleavage.</text>
</comment>
<comment type="subcellular location">
    <subcellularLocation>
        <location evidence="1">Cytoplasm</location>
    </subcellularLocation>
</comment>
<comment type="similarity">
    <text evidence="1">Belongs to the RecA family.</text>
</comment>
<organism>
    <name type="scientific">Borrelia duttonii (strain Ly)</name>
    <dbReference type="NCBI Taxonomy" id="412419"/>
    <lineage>
        <taxon>Bacteria</taxon>
        <taxon>Pseudomonadati</taxon>
        <taxon>Spirochaetota</taxon>
        <taxon>Spirochaetia</taxon>
        <taxon>Spirochaetales</taxon>
        <taxon>Borreliaceae</taxon>
        <taxon>Borrelia</taxon>
    </lineage>
</organism>
<accession>B5RLK6</accession>
<evidence type="ECO:0000255" key="1">
    <source>
        <dbReference type="HAMAP-Rule" id="MF_00268"/>
    </source>
</evidence>
<reference key="1">
    <citation type="journal article" date="2008" name="PLoS Genet.">
        <title>The genome of Borrelia recurrentis, the agent of deadly louse-borne relapsing fever, is a degraded subset of tick-borne Borrelia duttonii.</title>
        <authorList>
            <person name="Lescot M."/>
            <person name="Audic S."/>
            <person name="Robert C."/>
            <person name="Nguyen T.T."/>
            <person name="Blanc G."/>
            <person name="Cutler S.J."/>
            <person name="Wincker P."/>
            <person name="Couloux A."/>
            <person name="Claverie J.-M."/>
            <person name="Raoult D."/>
            <person name="Drancourt M."/>
        </authorList>
    </citation>
    <scope>NUCLEOTIDE SEQUENCE [LARGE SCALE GENOMIC DNA]</scope>
    <source>
        <strain>Ly</strain>
    </source>
</reference>
<name>RECA_BORDL</name>